<organism>
    <name type="scientific">Geobacillus thermodenitrificans (strain NG80-2)</name>
    <dbReference type="NCBI Taxonomy" id="420246"/>
    <lineage>
        <taxon>Bacteria</taxon>
        <taxon>Bacillati</taxon>
        <taxon>Bacillota</taxon>
        <taxon>Bacilli</taxon>
        <taxon>Bacillales</taxon>
        <taxon>Anoxybacillaceae</taxon>
        <taxon>Geobacillus</taxon>
    </lineage>
</organism>
<reference key="1">
    <citation type="journal article" date="2007" name="Proc. Natl. Acad. Sci. U.S.A.">
        <title>Genome and proteome of long-chain alkane degrading Geobacillus thermodenitrificans NG80-2 isolated from a deep-subsurface oil reservoir.</title>
        <authorList>
            <person name="Feng L."/>
            <person name="Wang W."/>
            <person name="Cheng J."/>
            <person name="Ren Y."/>
            <person name="Zhao G."/>
            <person name="Gao C."/>
            <person name="Tang Y."/>
            <person name="Liu X."/>
            <person name="Han W."/>
            <person name="Peng X."/>
            <person name="Liu R."/>
            <person name="Wang L."/>
        </authorList>
    </citation>
    <scope>NUCLEOTIDE SEQUENCE [LARGE SCALE GENOMIC DNA]</scope>
    <source>
        <strain>NG80-2</strain>
    </source>
</reference>
<accession>A4IP94</accession>
<sequence>MNQTLDNIVSLAKQCRGHHHYDISIEQIVVSHEAFNQLAAYLRYKQYKKVVVVADNRTFTAAGRSLCDKLKNESVLYTVCLIQSDENEDVIADERAIMQVLLETPNDVDAFIAVGAGTVHDITRFSSYKMKVPFISVPTAPSVDGFTSMGAPLIIRGVKKTIQAQAPIAVFADTDVLCQAPKAMIAAGFGDMVAKYTSLADWQFAHWMANEPYCPLVYQLTIQSLNACVDHMEDIAAGNEKGIHVLMDALLQSGIAMLLMGQSYSASGAEHHLSHYWEMEFLRQNKRQVLHGAKVGVSTPIIVEHYQRVFWPLLSELKQRPKSMDETIWERLKIYTDSIQELLESLPSPERIRAMVEKVGGAVAPQQLGIDPLLVERSLKEAHRLRLNRFTMLYCLNECMLMEG</sequence>
<keyword id="KW-0963">Cytoplasm</keyword>
<keyword id="KW-0444">Lipid biosynthesis</keyword>
<keyword id="KW-0443">Lipid metabolism</keyword>
<keyword id="KW-0479">Metal-binding</keyword>
<keyword id="KW-0520">NAD</keyword>
<keyword id="KW-0521">NADP</keyword>
<keyword id="KW-0533">Nickel</keyword>
<keyword id="KW-0560">Oxidoreductase</keyword>
<keyword id="KW-0594">Phospholipid biosynthesis</keyword>
<keyword id="KW-1208">Phospholipid metabolism</keyword>
<proteinExistence type="inferred from homology"/>
<feature type="chain" id="PRO_0000350641" description="Glycerol-1-phosphate dehydrogenase [NAD(P)+]">
    <location>
        <begin position="1"/>
        <end position="404"/>
    </location>
</feature>
<feature type="binding site" evidence="1">
    <location>
        <position position="55"/>
    </location>
    <ligand>
        <name>NAD(+)</name>
        <dbReference type="ChEBI" id="CHEBI:57540"/>
    </ligand>
</feature>
<feature type="binding site" evidence="1">
    <location>
        <begin position="117"/>
        <end position="121"/>
    </location>
    <ligand>
        <name>NAD(+)</name>
        <dbReference type="ChEBI" id="CHEBI:57540"/>
    </ligand>
</feature>
<feature type="binding site" evidence="1">
    <location>
        <begin position="139"/>
        <end position="142"/>
    </location>
    <ligand>
        <name>NAD(+)</name>
        <dbReference type="ChEBI" id="CHEBI:57540"/>
    </ligand>
</feature>
<feature type="binding site" evidence="1">
    <location>
        <position position="144"/>
    </location>
    <ligand>
        <name>substrate</name>
    </ligand>
</feature>
<feature type="binding site" evidence="1">
    <location>
        <position position="148"/>
    </location>
    <ligand>
        <name>NAD(+)</name>
        <dbReference type="ChEBI" id="CHEBI:57540"/>
    </ligand>
</feature>
<feature type="binding site" evidence="1">
    <location>
        <position position="191"/>
    </location>
    <ligand>
        <name>Ni(2+)</name>
        <dbReference type="ChEBI" id="CHEBI:49786"/>
        <note>catalytic</note>
    </ligand>
</feature>
<feature type="binding site" evidence="1">
    <location>
        <position position="191"/>
    </location>
    <ligand>
        <name>substrate</name>
    </ligand>
</feature>
<feature type="binding site" evidence="1">
    <location>
        <position position="271"/>
    </location>
    <ligand>
        <name>Ni(2+)</name>
        <dbReference type="ChEBI" id="CHEBI:49786"/>
        <note>catalytic</note>
    </ligand>
</feature>
<feature type="binding site" evidence="1">
    <location>
        <position position="275"/>
    </location>
    <ligand>
        <name>substrate</name>
    </ligand>
</feature>
<feature type="binding site" evidence="1">
    <location>
        <position position="291"/>
    </location>
    <ligand>
        <name>Ni(2+)</name>
        <dbReference type="ChEBI" id="CHEBI:49786"/>
        <note>catalytic</note>
    </ligand>
</feature>
<protein>
    <recommendedName>
        <fullName evidence="1">Glycerol-1-phosphate dehydrogenase [NAD(P)+]</fullName>
        <shortName evidence="1">G1P dehydrogenase</shortName>
        <shortName evidence="1">G1PDH</shortName>
        <ecNumber evidence="1">1.1.1.261</ecNumber>
    </recommendedName>
    <alternativeName>
        <fullName evidence="1">Enantiomeric glycerophosphate synthase</fullName>
    </alternativeName>
    <alternativeName>
        <fullName evidence="1">sn-glycerol-1-phosphate dehydrogenase</fullName>
    </alternativeName>
</protein>
<comment type="function">
    <text evidence="1">Catalyzes the NAD(P)H-dependent reduction of dihydroxyacetonephosphate (DHAP or glycerone phosphate) to glycerol 1-phosphate (G1P). The G1P thus generated is probably used for the synthesis of phosphoglycerolipids in Gram-positive bacterial species.</text>
</comment>
<comment type="catalytic activity">
    <reaction evidence="1">
        <text>sn-glycerol 1-phosphate + NAD(+) = dihydroxyacetone phosphate + NADH + H(+)</text>
        <dbReference type="Rhea" id="RHEA:21412"/>
        <dbReference type="ChEBI" id="CHEBI:15378"/>
        <dbReference type="ChEBI" id="CHEBI:57540"/>
        <dbReference type="ChEBI" id="CHEBI:57642"/>
        <dbReference type="ChEBI" id="CHEBI:57685"/>
        <dbReference type="ChEBI" id="CHEBI:57945"/>
        <dbReference type="EC" id="1.1.1.261"/>
    </reaction>
</comment>
<comment type="catalytic activity">
    <reaction evidence="1">
        <text>sn-glycerol 1-phosphate + NADP(+) = dihydroxyacetone phosphate + NADPH + H(+)</text>
        <dbReference type="Rhea" id="RHEA:21416"/>
        <dbReference type="ChEBI" id="CHEBI:15378"/>
        <dbReference type="ChEBI" id="CHEBI:57642"/>
        <dbReference type="ChEBI" id="CHEBI:57685"/>
        <dbReference type="ChEBI" id="CHEBI:57783"/>
        <dbReference type="ChEBI" id="CHEBI:58349"/>
        <dbReference type="EC" id="1.1.1.261"/>
    </reaction>
</comment>
<comment type="cofactor">
    <cofactor evidence="1">
        <name>Ni(2+)</name>
        <dbReference type="ChEBI" id="CHEBI:49786"/>
    </cofactor>
    <text evidence="1">Binds 1 nickel ion per subunit.</text>
</comment>
<comment type="subunit">
    <text evidence="1">Homodimer.</text>
</comment>
<comment type="subcellular location">
    <subcellularLocation>
        <location evidence="1">Cytoplasm</location>
    </subcellularLocation>
</comment>
<comment type="similarity">
    <text evidence="1">Belongs to the glycerol-1-phosphate dehydrogenase family.</text>
</comment>
<evidence type="ECO:0000255" key="1">
    <source>
        <dbReference type="HAMAP-Rule" id="MF_00497"/>
    </source>
</evidence>
<name>G1PDH_GEOTN</name>
<dbReference type="EC" id="1.1.1.261" evidence="1"/>
<dbReference type="EMBL" id="CP000557">
    <property type="protein sequence ID" value="ABO67148.1"/>
    <property type="molecule type" value="Genomic_DNA"/>
</dbReference>
<dbReference type="RefSeq" id="WP_011887518.1">
    <property type="nucleotide sequence ID" value="NC_009328.1"/>
</dbReference>
<dbReference type="SMR" id="A4IP94"/>
<dbReference type="KEGG" id="gtn:GTNG_1788"/>
<dbReference type="eggNOG" id="COG0371">
    <property type="taxonomic scope" value="Bacteria"/>
</dbReference>
<dbReference type="HOGENOM" id="CLU_038362_1_0_9"/>
<dbReference type="Proteomes" id="UP000001578">
    <property type="component" value="Chromosome"/>
</dbReference>
<dbReference type="GO" id="GO:0005737">
    <property type="term" value="C:cytoplasm"/>
    <property type="evidence" value="ECO:0007669"/>
    <property type="project" value="UniProtKB-SubCell"/>
</dbReference>
<dbReference type="GO" id="GO:0106357">
    <property type="term" value="F:glycerol-1-phosphate dehydrogenase (NAD+) activity"/>
    <property type="evidence" value="ECO:0007669"/>
    <property type="project" value="RHEA"/>
</dbReference>
<dbReference type="GO" id="GO:0106358">
    <property type="term" value="F:glycerol-1-phosphate dehydrogenase (NADP+) activity"/>
    <property type="evidence" value="ECO:0007669"/>
    <property type="project" value="RHEA"/>
</dbReference>
<dbReference type="GO" id="GO:0046872">
    <property type="term" value="F:metal ion binding"/>
    <property type="evidence" value="ECO:0007669"/>
    <property type="project" value="UniProtKB-KW"/>
</dbReference>
<dbReference type="GO" id="GO:0006650">
    <property type="term" value="P:glycerophospholipid metabolic process"/>
    <property type="evidence" value="ECO:0007669"/>
    <property type="project" value="UniProtKB-UniRule"/>
</dbReference>
<dbReference type="GO" id="GO:0008654">
    <property type="term" value="P:phospholipid biosynthetic process"/>
    <property type="evidence" value="ECO:0007669"/>
    <property type="project" value="UniProtKB-KW"/>
</dbReference>
<dbReference type="CDD" id="cd08175">
    <property type="entry name" value="G1PDH"/>
    <property type="match status" value="1"/>
</dbReference>
<dbReference type="Gene3D" id="3.40.50.1970">
    <property type="match status" value="1"/>
</dbReference>
<dbReference type="Gene3D" id="1.20.1090.10">
    <property type="entry name" value="Dehydroquinate synthase-like - alpha domain"/>
    <property type="match status" value="1"/>
</dbReference>
<dbReference type="HAMAP" id="MF_00497_B">
    <property type="entry name" value="G1P_dehydrogenase_B"/>
    <property type="match status" value="1"/>
</dbReference>
<dbReference type="InterPro" id="IPR023003">
    <property type="entry name" value="G1P_dehydrogenase_bac"/>
</dbReference>
<dbReference type="InterPro" id="IPR032837">
    <property type="entry name" value="G1PDH"/>
</dbReference>
<dbReference type="InterPro" id="IPR016205">
    <property type="entry name" value="Glycerol_DH"/>
</dbReference>
<dbReference type="PANTHER" id="PTHR43616">
    <property type="entry name" value="GLYCEROL DEHYDROGENASE"/>
    <property type="match status" value="1"/>
</dbReference>
<dbReference type="PANTHER" id="PTHR43616:SF5">
    <property type="entry name" value="GLYCEROL DEHYDROGENASE 1"/>
    <property type="match status" value="1"/>
</dbReference>
<dbReference type="Pfam" id="PF13685">
    <property type="entry name" value="Fe-ADH_2"/>
    <property type="match status" value="1"/>
</dbReference>
<dbReference type="SUPFAM" id="SSF56796">
    <property type="entry name" value="Dehydroquinate synthase-like"/>
    <property type="match status" value="1"/>
</dbReference>
<gene>
    <name evidence="1" type="primary">egsA</name>
    <name type="ordered locus">GTNG_1788</name>
</gene>